<sequence length="458" mass="52096">MQKLSIPKGTRDFTPCEMDKRNYIFDTIRSVFYLYGFKQIETPALENLSTLLGKYGEENDKLLFKILNSGDFISKVNPIDWNNHQLSKLTKQISKKGLRYDLTLPLARFVVMHRNEITFPFKRFQIQPVWRSDRPQKGRYREFVQCDADIVGSDSLLNEVELIQIIDEVFHRLSISISIKINNRKILNGIAEIISEEKKITDITTAMDKLDKVGLTKVNEELLQKGISIQAIDQLQPFFLLKGSNQNKISTLKNILSTSPIGIKGLQEIETIFNKLNLIPTRNTIKFDLTLARGLNYYTGTIFEVKCLNVPIGSVLGGGRYDNLTNIFGLSNLSGVGISFGADRIFDILNQLNLYPNTNASHTQILFVNLGEKGVDFILPVLFSLRKVGINAELYPHNTKIKKQLSYAHNNQIPFVAIVGSTEIAENKITIKDMRSCSQFSIALDKLINFFQYERQSV</sequence>
<comment type="catalytic activity">
    <reaction evidence="1">
        <text>tRNA(His) + L-histidine + ATP = L-histidyl-tRNA(His) + AMP + diphosphate + H(+)</text>
        <dbReference type="Rhea" id="RHEA:17313"/>
        <dbReference type="Rhea" id="RHEA-COMP:9665"/>
        <dbReference type="Rhea" id="RHEA-COMP:9689"/>
        <dbReference type="ChEBI" id="CHEBI:15378"/>
        <dbReference type="ChEBI" id="CHEBI:30616"/>
        <dbReference type="ChEBI" id="CHEBI:33019"/>
        <dbReference type="ChEBI" id="CHEBI:57595"/>
        <dbReference type="ChEBI" id="CHEBI:78442"/>
        <dbReference type="ChEBI" id="CHEBI:78527"/>
        <dbReference type="ChEBI" id="CHEBI:456215"/>
        <dbReference type="EC" id="6.1.1.21"/>
    </reaction>
</comment>
<comment type="subunit">
    <text evidence="1">Homodimer.</text>
</comment>
<comment type="subcellular location">
    <subcellularLocation>
        <location evidence="1">Cytoplasm</location>
    </subcellularLocation>
</comment>
<comment type="similarity">
    <text evidence="1">Belongs to the class-II aminoacyl-tRNA synthetase family.</text>
</comment>
<keyword id="KW-0030">Aminoacyl-tRNA synthetase</keyword>
<keyword id="KW-0067">ATP-binding</keyword>
<keyword id="KW-0963">Cytoplasm</keyword>
<keyword id="KW-0436">Ligase</keyword>
<keyword id="KW-0547">Nucleotide-binding</keyword>
<keyword id="KW-0648">Protein biosynthesis</keyword>
<keyword id="KW-1185">Reference proteome</keyword>
<organism>
    <name type="scientific">Azobacteroides pseudotrichonymphae genomovar. CFP2</name>
    <dbReference type="NCBI Taxonomy" id="511995"/>
    <lineage>
        <taxon>Bacteria</taxon>
        <taxon>Pseudomonadati</taxon>
        <taxon>Bacteroidota</taxon>
        <taxon>Bacteroidia</taxon>
        <taxon>Bacteroidales</taxon>
        <taxon>Candidatus Azobacteroides</taxon>
    </lineage>
</organism>
<protein>
    <recommendedName>
        <fullName evidence="1">Histidine--tRNA ligase</fullName>
        <ecNumber evidence="1">6.1.1.21</ecNumber>
    </recommendedName>
    <alternativeName>
        <fullName evidence="1">Histidyl-tRNA synthetase</fullName>
        <shortName evidence="1">HisRS</shortName>
    </alternativeName>
</protein>
<dbReference type="EC" id="6.1.1.21" evidence="1"/>
<dbReference type="EMBL" id="AP010656">
    <property type="protein sequence ID" value="BAG83995.1"/>
    <property type="molecule type" value="Genomic_DNA"/>
</dbReference>
<dbReference type="RefSeq" id="WP_012573751.1">
    <property type="nucleotide sequence ID" value="NC_011565.1"/>
</dbReference>
<dbReference type="SMR" id="B6YS23"/>
<dbReference type="STRING" id="511995.CFPG_732"/>
<dbReference type="KEGG" id="aps:CFPG_732"/>
<dbReference type="eggNOG" id="COG0124">
    <property type="taxonomic scope" value="Bacteria"/>
</dbReference>
<dbReference type="HOGENOM" id="CLU_025113_3_0_10"/>
<dbReference type="OrthoDB" id="9800814at2"/>
<dbReference type="Proteomes" id="UP000000723">
    <property type="component" value="Chromosome"/>
</dbReference>
<dbReference type="GO" id="GO:0005737">
    <property type="term" value="C:cytoplasm"/>
    <property type="evidence" value="ECO:0007669"/>
    <property type="project" value="UniProtKB-SubCell"/>
</dbReference>
<dbReference type="GO" id="GO:0005524">
    <property type="term" value="F:ATP binding"/>
    <property type="evidence" value="ECO:0007669"/>
    <property type="project" value="UniProtKB-UniRule"/>
</dbReference>
<dbReference type="GO" id="GO:0004821">
    <property type="term" value="F:histidine-tRNA ligase activity"/>
    <property type="evidence" value="ECO:0007669"/>
    <property type="project" value="UniProtKB-UniRule"/>
</dbReference>
<dbReference type="GO" id="GO:0006427">
    <property type="term" value="P:histidyl-tRNA aminoacylation"/>
    <property type="evidence" value="ECO:0007669"/>
    <property type="project" value="UniProtKB-UniRule"/>
</dbReference>
<dbReference type="CDD" id="cd00773">
    <property type="entry name" value="HisRS-like_core"/>
    <property type="match status" value="1"/>
</dbReference>
<dbReference type="CDD" id="cd00859">
    <property type="entry name" value="HisRS_anticodon"/>
    <property type="match status" value="1"/>
</dbReference>
<dbReference type="FunFam" id="3.30.930.10:FF:000093">
    <property type="entry name" value="Histidine--tRNA ligase"/>
    <property type="match status" value="1"/>
</dbReference>
<dbReference type="Gene3D" id="3.40.50.800">
    <property type="entry name" value="Anticodon-binding domain"/>
    <property type="match status" value="1"/>
</dbReference>
<dbReference type="Gene3D" id="3.30.930.10">
    <property type="entry name" value="Bira Bifunctional Protein, Domain 2"/>
    <property type="match status" value="1"/>
</dbReference>
<dbReference type="HAMAP" id="MF_00127">
    <property type="entry name" value="His_tRNA_synth"/>
    <property type="match status" value="1"/>
</dbReference>
<dbReference type="InterPro" id="IPR006195">
    <property type="entry name" value="aa-tRNA-synth_II"/>
</dbReference>
<dbReference type="InterPro" id="IPR045864">
    <property type="entry name" value="aa-tRNA-synth_II/BPL/LPL"/>
</dbReference>
<dbReference type="InterPro" id="IPR004154">
    <property type="entry name" value="Anticodon-bd"/>
</dbReference>
<dbReference type="InterPro" id="IPR036621">
    <property type="entry name" value="Anticodon-bd_dom_sf"/>
</dbReference>
<dbReference type="InterPro" id="IPR015807">
    <property type="entry name" value="His-tRNA-ligase"/>
</dbReference>
<dbReference type="InterPro" id="IPR041715">
    <property type="entry name" value="HisRS-like_core"/>
</dbReference>
<dbReference type="InterPro" id="IPR004516">
    <property type="entry name" value="HisRS/HisZ"/>
</dbReference>
<dbReference type="InterPro" id="IPR033656">
    <property type="entry name" value="HisRS_anticodon"/>
</dbReference>
<dbReference type="NCBIfam" id="TIGR00442">
    <property type="entry name" value="hisS"/>
    <property type="match status" value="1"/>
</dbReference>
<dbReference type="PANTHER" id="PTHR11476:SF7">
    <property type="entry name" value="HISTIDINE--TRNA LIGASE"/>
    <property type="match status" value="1"/>
</dbReference>
<dbReference type="PANTHER" id="PTHR11476">
    <property type="entry name" value="HISTIDYL-TRNA SYNTHETASE"/>
    <property type="match status" value="1"/>
</dbReference>
<dbReference type="Pfam" id="PF03129">
    <property type="entry name" value="HGTP_anticodon"/>
    <property type="match status" value="1"/>
</dbReference>
<dbReference type="Pfam" id="PF13393">
    <property type="entry name" value="tRNA-synt_His"/>
    <property type="match status" value="1"/>
</dbReference>
<dbReference type="PIRSF" id="PIRSF001549">
    <property type="entry name" value="His-tRNA_synth"/>
    <property type="match status" value="1"/>
</dbReference>
<dbReference type="SUPFAM" id="SSF52954">
    <property type="entry name" value="Class II aaRS ABD-related"/>
    <property type="match status" value="1"/>
</dbReference>
<dbReference type="SUPFAM" id="SSF55681">
    <property type="entry name" value="Class II aaRS and biotin synthetases"/>
    <property type="match status" value="1"/>
</dbReference>
<dbReference type="PROSITE" id="PS50862">
    <property type="entry name" value="AA_TRNA_LIGASE_II"/>
    <property type="match status" value="1"/>
</dbReference>
<gene>
    <name evidence="1" type="primary">hisS</name>
    <name type="ordered locus">CFPG_732</name>
</gene>
<accession>B6YS23</accession>
<name>SYH_AZOPC</name>
<proteinExistence type="inferred from homology"/>
<reference key="1">
    <citation type="journal article" date="2008" name="Science">
        <title>Genome of an endosymbiont coupling N2 fixation to cellulolysis within RT protist cells in termite gut.</title>
        <authorList>
            <person name="Hongoh Y."/>
            <person name="Sharma V.K."/>
            <person name="Prakash T."/>
            <person name="Noda S."/>
            <person name="Toh H."/>
            <person name="Taylor T.D."/>
            <person name="Kudo T."/>
            <person name="Sakaki Y."/>
            <person name="Toyoda A."/>
            <person name="Hattori M."/>
            <person name="Ohkuma M."/>
        </authorList>
    </citation>
    <scope>NUCLEOTIDE SEQUENCE [LARGE SCALE GENOMIC DNA]</scope>
</reference>
<feature type="chain" id="PRO_1000095528" description="Histidine--tRNA ligase">
    <location>
        <begin position="1"/>
        <end position="458"/>
    </location>
</feature>
<evidence type="ECO:0000255" key="1">
    <source>
        <dbReference type="HAMAP-Rule" id="MF_00127"/>
    </source>
</evidence>